<dbReference type="EMBL" id="CP001157">
    <property type="protein sequence ID" value="ACO81315.1"/>
    <property type="molecule type" value="Genomic_DNA"/>
</dbReference>
<dbReference type="RefSeq" id="WP_012703668.1">
    <property type="nucleotide sequence ID" value="NC_012560.1"/>
</dbReference>
<dbReference type="SMR" id="C1DNF7"/>
<dbReference type="STRING" id="322710.Avin_52450"/>
<dbReference type="EnsemblBacteria" id="ACO81315">
    <property type="protein sequence ID" value="ACO81315"/>
    <property type="gene ID" value="Avin_52450"/>
</dbReference>
<dbReference type="GeneID" id="88188052"/>
<dbReference type="KEGG" id="avn:Avin_52450"/>
<dbReference type="eggNOG" id="COG0706">
    <property type="taxonomic scope" value="Bacteria"/>
</dbReference>
<dbReference type="HOGENOM" id="CLU_016535_3_0_6"/>
<dbReference type="OrthoDB" id="9780552at2"/>
<dbReference type="Proteomes" id="UP000002424">
    <property type="component" value="Chromosome"/>
</dbReference>
<dbReference type="GO" id="GO:0005886">
    <property type="term" value="C:plasma membrane"/>
    <property type="evidence" value="ECO:0007669"/>
    <property type="project" value="UniProtKB-SubCell"/>
</dbReference>
<dbReference type="GO" id="GO:0032977">
    <property type="term" value="F:membrane insertase activity"/>
    <property type="evidence" value="ECO:0007669"/>
    <property type="project" value="InterPro"/>
</dbReference>
<dbReference type="GO" id="GO:0051205">
    <property type="term" value="P:protein insertion into membrane"/>
    <property type="evidence" value="ECO:0007669"/>
    <property type="project" value="TreeGrafter"/>
</dbReference>
<dbReference type="GO" id="GO:0015031">
    <property type="term" value="P:protein transport"/>
    <property type="evidence" value="ECO:0007669"/>
    <property type="project" value="UniProtKB-KW"/>
</dbReference>
<dbReference type="CDD" id="cd20070">
    <property type="entry name" value="5TM_YidC_Alb3"/>
    <property type="match status" value="1"/>
</dbReference>
<dbReference type="CDD" id="cd19961">
    <property type="entry name" value="EcYidC-like_peri"/>
    <property type="match status" value="1"/>
</dbReference>
<dbReference type="Gene3D" id="2.70.98.90">
    <property type="match status" value="1"/>
</dbReference>
<dbReference type="HAMAP" id="MF_01810">
    <property type="entry name" value="YidC_type1"/>
    <property type="match status" value="1"/>
</dbReference>
<dbReference type="InterPro" id="IPR019998">
    <property type="entry name" value="Membr_insert_YidC"/>
</dbReference>
<dbReference type="InterPro" id="IPR028053">
    <property type="entry name" value="Membr_insert_YidC_N"/>
</dbReference>
<dbReference type="InterPro" id="IPR001708">
    <property type="entry name" value="YidC/ALB3/OXA1/COX18"/>
</dbReference>
<dbReference type="InterPro" id="IPR028055">
    <property type="entry name" value="YidC/Oxa/ALB_C"/>
</dbReference>
<dbReference type="InterPro" id="IPR047196">
    <property type="entry name" value="YidC_ALB_C"/>
</dbReference>
<dbReference type="InterPro" id="IPR038221">
    <property type="entry name" value="YidC_periplasmic_sf"/>
</dbReference>
<dbReference type="NCBIfam" id="NF002352">
    <property type="entry name" value="PRK01318.1-3"/>
    <property type="match status" value="1"/>
</dbReference>
<dbReference type="NCBIfam" id="NF002353">
    <property type="entry name" value="PRK01318.1-4"/>
    <property type="match status" value="1"/>
</dbReference>
<dbReference type="NCBIfam" id="TIGR03593">
    <property type="entry name" value="yidC_nterm"/>
    <property type="match status" value="1"/>
</dbReference>
<dbReference type="NCBIfam" id="TIGR03592">
    <property type="entry name" value="yidC_oxa1_cterm"/>
    <property type="match status" value="1"/>
</dbReference>
<dbReference type="PANTHER" id="PTHR12428:SF65">
    <property type="entry name" value="CYTOCHROME C OXIDASE ASSEMBLY PROTEIN COX18, MITOCHONDRIAL"/>
    <property type="match status" value="1"/>
</dbReference>
<dbReference type="PANTHER" id="PTHR12428">
    <property type="entry name" value="OXA1"/>
    <property type="match status" value="1"/>
</dbReference>
<dbReference type="Pfam" id="PF02096">
    <property type="entry name" value="60KD_IMP"/>
    <property type="match status" value="1"/>
</dbReference>
<dbReference type="Pfam" id="PF14849">
    <property type="entry name" value="YidC_periplas"/>
    <property type="match status" value="1"/>
</dbReference>
<dbReference type="PRINTS" id="PR00701">
    <property type="entry name" value="60KDINNERMP"/>
</dbReference>
<dbReference type="PRINTS" id="PR01900">
    <property type="entry name" value="YIDCPROTEIN"/>
</dbReference>
<organism>
    <name type="scientific">Azotobacter vinelandii (strain DJ / ATCC BAA-1303)</name>
    <dbReference type="NCBI Taxonomy" id="322710"/>
    <lineage>
        <taxon>Bacteria</taxon>
        <taxon>Pseudomonadati</taxon>
        <taxon>Pseudomonadota</taxon>
        <taxon>Gammaproteobacteria</taxon>
        <taxon>Pseudomonadales</taxon>
        <taxon>Pseudomonadaceae</taxon>
        <taxon>Azotobacter</taxon>
    </lineage>
</organism>
<sequence>MDIKRSILLVALAVVSYLLVLQWNQDYGQAALPPQNAVAQSASPALPETVPGDSSTSADVPTAGSGNQVPDSAASTAGSDLIQVRTDVLEVAIDPRGGDIVQLKLPKFPRRQDHPEIPFQLFDNGSERLYLAQSGLTGTNGPDARADGRPLYVSEQRSYQLADGQDSLVVDLKFSDGGVDYVKRFTFKRGAYDLEVRHQIANHSEQPWSGNLFAQLKRDASADPSSTTATGTATYLGAALWTSEEPYRKVSMGDMDDKNLRETVQGGWVAWLQHYFVTAWVPNKDDTNLVATRKDSQGNYIIGFTGSTLNIPAGATGETVTRLYAGPKDQNQLEALSPGLELTVDYGFLWFIAQPIFWLLELIHALLGNWGWSIIVLTVIIKLAFFPLSAASYRSMGRMRAVAPKLQALKEQHGEDRQKLSQAMMELYKKEKINPLGGCLPILVQMPVFLALYWVLLESVEMRQAPWLGWITDLSVKDPYFILPIIMGATMFFQQTLNPTPPDPMQARVMKLMPIIFTFFFLWFPAGLVLYWVVNNVLSIGQQWYITRQIEKAAQLA</sequence>
<proteinExistence type="inferred from homology"/>
<comment type="function">
    <text evidence="1">Required for the insertion and/or proper folding and/or complex formation of integral membrane proteins into the membrane. Involved in integration of membrane proteins that insert both dependently and independently of the Sec translocase complex, as well as at least some lipoproteins. Aids folding of multispanning membrane proteins.</text>
</comment>
<comment type="subunit">
    <text evidence="1">Interacts with the Sec translocase complex via SecD. Specifically interacts with transmembrane segments of nascent integral membrane proteins during membrane integration.</text>
</comment>
<comment type="subcellular location">
    <subcellularLocation>
        <location evidence="1">Cell inner membrane</location>
        <topology evidence="1">Multi-pass membrane protein</topology>
    </subcellularLocation>
</comment>
<comment type="similarity">
    <text evidence="1">Belongs to the OXA1/ALB3/YidC family. Type 1 subfamily.</text>
</comment>
<keyword id="KW-0997">Cell inner membrane</keyword>
<keyword id="KW-1003">Cell membrane</keyword>
<keyword id="KW-0143">Chaperone</keyword>
<keyword id="KW-0472">Membrane</keyword>
<keyword id="KW-0653">Protein transport</keyword>
<keyword id="KW-0812">Transmembrane</keyword>
<keyword id="KW-1133">Transmembrane helix</keyword>
<keyword id="KW-0813">Transport</keyword>
<gene>
    <name evidence="1" type="primary">yidC</name>
    <name type="ordered locus">Avin_52450</name>
</gene>
<feature type="chain" id="PRO_1000215963" description="Membrane protein insertase YidC">
    <location>
        <begin position="1"/>
        <end position="557"/>
    </location>
</feature>
<feature type="transmembrane region" description="Helical" evidence="1">
    <location>
        <begin position="7"/>
        <end position="27"/>
    </location>
</feature>
<feature type="transmembrane region" description="Helical" evidence="1">
    <location>
        <begin position="370"/>
        <end position="390"/>
    </location>
</feature>
<feature type="transmembrane region" description="Helical" evidence="1">
    <location>
        <begin position="436"/>
        <end position="456"/>
    </location>
</feature>
<feature type="transmembrane region" description="Helical" evidence="1">
    <location>
        <begin position="514"/>
        <end position="534"/>
    </location>
</feature>
<feature type="region of interest" description="Disordered" evidence="2">
    <location>
        <begin position="42"/>
        <end position="77"/>
    </location>
</feature>
<feature type="compositionally biased region" description="Polar residues" evidence="2">
    <location>
        <begin position="52"/>
        <end position="77"/>
    </location>
</feature>
<name>YIDC_AZOVD</name>
<protein>
    <recommendedName>
        <fullName evidence="1">Membrane protein insertase YidC</fullName>
    </recommendedName>
    <alternativeName>
        <fullName evidence="1">Foldase YidC</fullName>
    </alternativeName>
    <alternativeName>
        <fullName evidence="1">Membrane integrase YidC</fullName>
    </alternativeName>
    <alternativeName>
        <fullName evidence="1">Membrane protein YidC</fullName>
    </alternativeName>
</protein>
<reference key="1">
    <citation type="journal article" date="2009" name="J. Bacteriol.">
        <title>Genome sequence of Azotobacter vinelandii, an obligate aerobe specialized to support diverse anaerobic metabolic processes.</title>
        <authorList>
            <person name="Setubal J.C."/>
            <person name="Dos Santos P."/>
            <person name="Goldman B.S."/>
            <person name="Ertesvaag H."/>
            <person name="Espin G."/>
            <person name="Rubio L.M."/>
            <person name="Valla S."/>
            <person name="Almeida N.F."/>
            <person name="Balasubramanian D."/>
            <person name="Cromes L."/>
            <person name="Curatti L."/>
            <person name="Du Z."/>
            <person name="Godsy E."/>
            <person name="Goodner B."/>
            <person name="Hellner-Burris K."/>
            <person name="Hernandez J.A."/>
            <person name="Houmiel K."/>
            <person name="Imperial J."/>
            <person name="Kennedy C."/>
            <person name="Larson T.J."/>
            <person name="Latreille P."/>
            <person name="Ligon L.S."/>
            <person name="Lu J."/>
            <person name="Maerk M."/>
            <person name="Miller N.M."/>
            <person name="Norton S."/>
            <person name="O'Carroll I.P."/>
            <person name="Paulsen I."/>
            <person name="Raulfs E.C."/>
            <person name="Roemer R."/>
            <person name="Rosser J."/>
            <person name="Segura D."/>
            <person name="Slater S."/>
            <person name="Stricklin S.L."/>
            <person name="Studholme D.J."/>
            <person name="Sun J."/>
            <person name="Viana C.J."/>
            <person name="Wallin E."/>
            <person name="Wang B."/>
            <person name="Wheeler C."/>
            <person name="Zhu H."/>
            <person name="Dean D.R."/>
            <person name="Dixon R."/>
            <person name="Wood D."/>
        </authorList>
    </citation>
    <scope>NUCLEOTIDE SEQUENCE [LARGE SCALE GENOMIC DNA]</scope>
    <source>
        <strain>DJ / ATCC BAA-1303</strain>
    </source>
</reference>
<evidence type="ECO:0000255" key="1">
    <source>
        <dbReference type="HAMAP-Rule" id="MF_01810"/>
    </source>
</evidence>
<evidence type="ECO:0000256" key="2">
    <source>
        <dbReference type="SAM" id="MobiDB-lite"/>
    </source>
</evidence>
<accession>C1DNF7</accession>